<organism>
    <name type="scientific">Pectobacterium atrosepticum (strain SCRI 1043 / ATCC BAA-672)</name>
    <name type="common">Erwinia carotovora subsp. atroseptica</name>
    <dbReference type="NCBI Taxonomy" id="218491"/>
    <lineage>
        <taxon>Bacteria</taxon>
        <taxon>Pseudomonadati</taxon>
        <taxon>Pseudomonadota</taxon>
        <taxon>Gammaproteobacteria</taxon>
        <taxon>Enterobacterales</taxon>
        <taxon>Pectobacteriaceae</taxon>
        <taxon>Pectobacterium</taxon>
    </lineage>
</organism>
<keyword id="KW-0119">Carbohydrate metabolism</keyword>
<keyword id="KW-0413">Isomerase</keyword>
<keyword id="KW-1185">Reference proteome</keyword>
<evidence type="ECO:0000250" key="1">
    <source>
        <dbReference type="UniProtKB" id="P37351"/>
    </source>
</evidence>
<evidence type="ECO:0000269" key="2">
    <source>
    </source>
</evidence>
<evidence type="ECO:0000303" key="3">
    <source>
    </source>
</evidence>
<evidence type="ECO:0000305" key="4"/>
<evidence type="ECO:0000312" key="5">
    <source>
        <dbReference type="EMBL" id="CAG73775.1"/>
    </source>
</evidence>
<accession>Q6D8V9</accession>
<gene>
    <name evidence="3" type="primary">derI</name>
    <name evidence="5" type="ordered locus">ECA0863</name>
</gene>
<feature type="chain" id="PRO_0000446036" description="D-erythrulose-4-phosphate isomerase">
    <location>
        <begin position="1"/>
        <end position="152"/>
    </location>
</feature>
<feature type="active site" description="Proton acceptor" evidence="1">
    <location>
        <position position="67"/>
    </location>
</feature>
<name>DERI_PECAS</name>
<comment type="function">
    <text evidence="2">Involved in catabolism of D-apiose. Catalyzes the isomerization of D-erythrulose 4-phosphate to D-erythrose 4-phosphate.</text>
</comment>
<comment type="catalytic activity">
    <reaction evidence="2">
        <text>D-erythrulose 4-phosphate = D-erythrose 4-phosphate</text>
        <dbReference type="Rhea" id="RHEA:48784"/>
        <dbReference type="ChEBI" id="CHEBI:16897"/>
        <dbReference type="ChEBI" id="CHEBI:90796"/>
        <dbReference type="EC" id="5.3.1.34"/>
    </reaction>
</comment>
<comment type="pathway">
    <text evidence="2">Carbohydrate metabolism.</text>
</comment>
<comment type="similarity">
    <text evidence="4">Belongs to the LacAB/RpiB family.</text>
</comment>
<dbReference type="EC" id="5.3.1.34" evidence="2"/>
<dbReference type="EMBL" id="BX950851">
    <property type="protein sequence ID" value="CAG73775.1"/>
    <property type="molecule type" value="Genomic_DNA"/>
</dbReference>
<dbReference type="RefSeq" id="WP_011092466.1">
    <property type="nucleotide sequence ID" value="NC_004547.2"/>
</dbReference>
<dbReference type="SMR" id="Q6D8V9"/>
<dbReference type="STRING" id="218491.ECA0863"/>
<dbReference type="KEGG" id="eca:ECA0863"/>
<dbReference type="PATRIC" id="fig|218491.5.peg.864"/>
<dbReference type="eggNOG" id="COG0698">
    <property type="taxonomic scope" value="Bacteria"/>
</dbReference>
<dbReference type="HOGENOM" id="CLU_091396_1_2_6"/>
<dbReference type="OrthoDB" id="1778624at2"/>
<dbReference type="BioCyc" id="MetaCyc:MONOMER-20964"/>
<dbReference type="Proteomes" id="UP000007966">
    <property type="component" value="Chromosome"/>
</dbReference>
<dbReference type="GO" id="GO:0016861">
    <property type="term" value="F:intramolecular oxidoreductase activity, interconverting aldoses and ketoses"/>
    <property type="evidence" value="ECO:0007669"/>
    <property type="project" value="UniProtKB-ARBA"/>
</dbReference>
<dbReference type="GO" id="GO:0005975">
    <property type="term" value="P:carbohydrate metabolic process"/>
    <property type="evidence" value="ECO:0007669"/>
    <property type="project" value="InterPro"/>
</dbReference>
<dbReference type="Gene3D" id="3.40.1400.10">
    <property type="entry name" value="Sugar-phosphate isomerase, RpiB/LacA/LacB"/>
    <property type="match status" value="1"/>
</dbReference>
<dbReference type="InterPro" id="IPR004785">
    <property type="entry name" value="RpiB"/>
</dbReference>
<dbReference type="InterPro" id="IPR003500">
    <property type="entry name" value="RpiB_LacA_LacB"/>
</dbReference>
<dbReference type="InterPro" id="IPR036569">
    <property type="entry name" value="RpiB_LacA_LacB_sf"/>
</dbReference>
<dbReference type="InterPro" id="IPR051812">
    <property type="entry name" value="SPI_LacAB/RpiB"/>
</dbReference>
<dbReference type="NCBIfam" id="NF004051">
    <property type="entry name" value="PRK05571.1"/>
    <property type="match status" value="1"/>
</dbReference>
<dbReference type="NCBIfam" id="TIGR01120">
    <property type="entry name" value="rpiB"/>
    <property type="match status" value="1"/>
</dbReference>
<dbReference type="NCBIfam" id="TIGR00689">
    <property type="entry name" value="rpiB_lacA_lacB"/>
    <property type="match status" value="1"/>
</dbReference>
<dbReference type="PANTHER" id="PTHR43732:SF1">
    <property type="entry name" value="RIBOSE 5-PHOSPHATE ISOMERASE"/>
    <property type="match status" value="1"/>
</dbReference>
<dbReference type="PANTHER" id="PTHR43732">
    <property type="entry name" value="RIBOSE 5-PHOSPHATE ISOMERASE-RELATED"/>
    <property type="match status" value="1"/>
</dbReference>
<dbReference type="Pfam" id="PF02502">
    <property type="entry name" value="LacAB_rpiB"/>
    <property type="match status" value="1"/>
</dbReference>
<dbReference type="PIRSF" id="PIRSF005384">
    <property type="entry name" value="RpiB_LacA_B"/>
    <property type="match status" value="1"/>
</dbReference>
<dbReference type="SUPFAM" id="SSF89623">
    <property type="entry name" value="Ribose/Galactose isomerase RpiB/AlsB"/>
    <property type="match status" value="1"/>
</dbReference>
<proteinExistence type="evidence at protein level"/>
<protein>
    <recommendedName>
        <fullName evidence="3">D-erythrulose-4-phosphate isomerase</fullName>
        <ecNumber evidence="2">5.3.1.34</ecNumber>
    </recommendedName>
</protein>
<reference key="1">
    <citation type="journal article" date="2004" name="Proc. Natl. Acad. Sci. U.S.A.">
        <title>Genome sequence of the enterobacterial phytopathogen Erwinia carotovora subsp. atroseptica and characterization of virulence factors.</title>
        <authorList>
            <person name="Bell K.S."/>
            <person name="Sebaihia M."/>
            <person name="Pritchard L."/>
            <person name="Holden M.T.G."/>
            <person name="Hyman L.J."/>
            <person name="Holeva M.C."/>
            <person name="Thomson N.R."/>
            <person name="Bentley S.D."/>
            <person name="Churcher L.J.C."/>
            <person name="Mungall K."/>
            <person name="Atkin R."/>
            <person name="Bason N."/>
            <person name="Brooks K."/>
            <person name="Chillingworth T."/>
            <person name="Clark K."/>
            <person name="Doggett J."/>
            <person name="Fraser A."/>
            <person name="Hance Z."/>
            <person name="Hauser H."/>
            <person name="Jagels K."/>
            <person name="Moule S."/>
            <person name="Norbertczak H."/>
            <person name="Ormond D."/>
            <person name="Price C."/>
            <person name="Quail M.A."/>
            <person name="Sanders M."/>
            <person name="Walker D."/>
            <person name="Whitehead S."/>
            <person name="Salmond G.P.C."/>
            <person name="Birch P.R.J."/>
            <person name="Parkhill J."/>
            <person name="Toth I.K."/>
        </authorList>
    </citation>
    <scope>NUCLEOTIDE SEQUENCE [LARGE SCALE GENOMIC DNA]</scope>
    <source>
        <strain>SCRI 1043 / ATCC BAA-672</strain>
    </source>
</reference>
<reference key="2">
    <citation type="journal article" date="2018" name="Nat. Chem. Biol.">
        <title>Functional assignment of multiple catabolic pathways for D-apiose.</title>
        <authorList>
            <person name="Carter M.S."/>
            <person name="Zhang X."/>
            <person name="Huang H."/>
            <person name="Bouvier J.T."/>
            <person name="Francisco B.S."/>
            <person name="Vetting M.W."/>
            <person name="Al-Obaidi N."/>
            <person name="Bonanno J.B."/>
            <person name="Ghosh A."/>
            <person name="Zallot R.G."/>
            <person name="Andersen H.M."/>
            <person name="Almo S.C."/>
            <person name="Gerlt J.A."/>
        </authorList>
    </citation>
    <scope>FUNCTION</scope>
    <scope>CATALYTIC ACTIVITY</scope>
    <scope>PATHWAY</scope>
</reference>
<sequence length="152" mass="16359">MLSIAIGADSAAIDLKNTITDYLQQKGLTVTDYSYDPTGENPIYPDVAYTLAHAIKDGKHQRGILLCGTGIGMCIVANKVNGIRAAQCHDTYSAQRARKSNNAQVIALGARVIGPELAKEIIGAWLDAEFEGGGSAPKVEKIGYYEHQEKHQ</sequence>